<dbReference type="EMBL" id="AAHF01000002">
    <property type="protein sequence ID" value="EAL92742.1"/>
    <property type="molecule type" value="Genomic_DNA"/>
</dbReference>
<dbReference type="RefSeq" id="XP_754780.1">
    <property type="nucleotide sequence ID" value="XM_749687.1"/>
</dbReference>
<dbReference type="STRING" id="330879.Q4WX61"/>
<dbReference type="EnsemblFungi" id="EAL92742">
    <property type="protein sequence ID" value="EAL92742"/>
    <property type="gene ID" value="AFUA_3G08340"/>
</dbReference>
<dbReference type="GeneID" id="3512211"/>
<dbReference type="KEGG" id="afm:AFUA_3G08340"/>
<dbReference type="VEuPathDB" id="FungiDB:Afu3g08340"/>
<dbReference type="eggNOG" id="ENOG502S4TY">
    <property type="taxonomic scope" value="Eukaryota"/>
</dbReference>
<dbReference type="HOGENOM" id="CLU_052067_0_0_1"/>
<dbReference type="InParanoid" id="Q4WX61"/>
<dbReference type="OMA" id="DCSFFWL"/>
<dbReference type="OrthoDB" id="5428737at2759"/>
<dbReference type="UniPathway" id="UPA00143"/>
<dbReference type="Proteomes" id="UP000002530">
    <property type="component" value="Chromosome 3"/>
</dbReference>
<dbReference type="GO" id="GO:0044695">
    <property type="term" value="C:Dsc E3 ubiquitin ligase complex"/>
    <property type="evidence" value="ECO:0000318"/>
    <property type="project" value="GO_Central"/>
</dbReference>
<dbReference type="GO" id="GO:0005789">
    <property type="term" value="C:endoplasmic reticulum membrane"/>
    <property type="evidence" value="ECO:0007669"/>
    <property type="project" value="UniProtKB-SubCell"/>
</dbReference>
<dbReference type="GO" id="GO:0032933">
    <property type="term" value="P:SREBP signaling pathway"/>
    <property type="evidence" value="ECO:0000318"/>
    <property type="project" value="GO_Central"/>
</dbReference>
<dbReference type="InterPro" id="IPR038967">
    <property type="entry name" value="Dsc4-like"/>
</dbReference>
<dbReference type="InterPro" id="IPR013715">
    <property type="entry name" value="DUF1746"/>
</dbReference>
<dbReference type="PANTHER" id="PTHR39405">
    <property type="entry name" value="DSC E3 UBIQUITIN LIGASE COMPLEX SUBUNIT 4"/>
    <property type="match status" value="1"/>
</dbReference>
<dbReference type="PANTHER" id="PTHR39405:SF1">
    <property type="entry name" value="DSC E3 UBIQUITIN LIGASE COMPLEX SUBUNIT 4"/>
    <property type="match status" value="1"/>
</dbReference>
<dbReference type="Pfam" id="PF08508">
    <property type="entry name" value="DUF1746"/>
    <property type="match status" value="1"/>
</dbReference>
<feature type="chain" id="PRO_0000460158" description="DSC E3 ubiquitin ligase complex subunit D">
    <location>
        <begin position="1"/>
        <end position="331"/>
    </location>
</feature>
<feature type="transmembrane region" description="Helical" evidence="1">
    <location>
        <begin position="63"/>
        <end position="83"/>
    </location>
</feature>
<feature type="transmembrane region" description="Helical" evidence="1">
    <location>
        <begin position="107"/>
        <end position="127"/>
    </location>
</feature>
<feature type="transmembrane region" description="Helical" evidence="1">
    <location>
        <begin position="159"/>
        <end position="179"/>
    </location>
</feature>
<feature type="region of interest" description="Disordered" evidence="3">
    <location>
        <begin position="188"/>
        <end position="225"/>
    </location>
</feature>
<feature type="compositionally biased region" description="Basic and acidic residues" evidence="3">
    <location>
        <begin position="196"/>
        <end position="214"/>
    </location>
</feature>
<feature type="glycosylation site" description="N-linked (GlcNAc...) asparagine" evidence="2">
    <location>
        <position position="26"/>
    </location>
</feature>
<gene>
    <name evidence="5" type="primary">dscD</name>
    <name type="ORF">AFUA_3G08340</name>
</gene>
<reference key="1">
    <citation type="journal article" date="2005" name="Nature">
        <title>Genomic sequence of the pathogenic and allergenic filamentous fungus Aspergillus fumigatus.</title>
        <authorList>
            <person name="Nierman W.C."/>
            <person name="Pain A."/>
            <person name="Anderson M.J."/>
            <person name="Wortman J.R."/>
            <person name="Kim H.S."/>
            <person name="Arroyo J."/>
            <person name="Berriman M."/>
            <person name="Abe K."/>
            <person name="Archer D.B."/>
            <person name="Bermejo C."/>
            <person name="Bennett J.W."/>
            <person name="Bowyer P."/>
            <person name="Chen D."/>
            <person name="Collins M."/>
            <person name="Coulsen R."/>
            <person name="Davies R."/>
            <person name="Dyer P.S."/>
            <person name="Farman M.L."/>
            <person name="Fedorova N."/>
            <person name="Fedorova N.D."/>
            <person name="Feldblyum T.V."/>
            <person name="Fischer R."/>
            <person name="Fosker N."/>
            <person name="Fraser A."/>
            <person name="Garcia J.L."/>
            <person name="Garcia M.J."/>
            <person name="Goble A."/>
            <person name="Goldman G.H."/>
            <person name="Gomi K."/>
            <person name="Griffith-Jones S."/>
            <person name="Gwilliam R."/>
            <person name="Haas B.J."/>
            <person name="Haas H."/>
            <person name="Harris D.E."/>
            <person name="Horiuchi H."/>
            <person name="Huang J."/>
            <person name="Humphray S."/>
            <person name="Jimenez J."/>
            <person name="Keller N."/>
            <person name="Khouri H."/>
            <person name="Kitamoto K."/>
            <person name="Kobayashi T."/>
            <person name="Konzack S."/>
            <person name="Kulkarni R."/>
            <person name="Kumagai T."/>
            <person name="Lafton A."/>
            <person name="Latge J.-P."/>
            <person name="Li W."/>
            <person name="Lord A."/>
            <person name="Lu C."/>
            <person name="Majoros W.H."/>
            <person name="May G.S."/>
            <person name="Miller B.L."/>
            <person name="Mohamoud Y."/>
            <person name="Molina M."/>
            <person name="Monod M."/>
            <person name="Mouyna I."/>
            <person name="Mulligan S."/>
            <person name="Murphy L.D."/>
            <person name="O'Neil S."/>
            <person name="Paulsen I."/>
            <person name="Penalva M.A."/>
            <person name="Pertea M."/>
            <person name="Price C."/>
            <person name="Pritchard B.L."/>
            <person name="Quail M.A."/>
            <person name="Rabbinowitsch E."/>
            <person name="Rawlins N."/>
            <person name="Rajandream M.A."/>
            <person name="Reichard U."/>
            <person name="Renauld H."/>
            <person name="Robson G.D."/>
            <person name="Rodriguez de Cordoba S."/>
            <person name="Rodriguez-Pena J.M."/>
            <person name="Ronning C.M."/>
            <person name="Rutter S."/>
            <person name="Salzberg S.L."/>
            <person name="Sanchez M."/>
            <person name="Sanchez-Ferrero J.C."/>
            <person name="Saunders D."/>
            <person name="Seeger K."/>
            <person name="Squares R."/>
            <person name="Squares S."/>
            <person name="Takeuchi M."/>
            <person name="Tekaia F."/>
            <person name="Turner G."/>
            <person name="Vazquez de Aldana C.R."/>
            <person name="Weidman J."/>
            <person name="White O."/>
            <person name="Woodward J.R."/>
            <person name="Yu J.-H."/>
            <person name="Fraser C.M."/>
            <person name="Galagan J.E."/>
            <person name="Asai K."/>
            <person name="Machida M."/>
            <person name="Hall N."/>
            <person name="Barrell B.G."/>
            <person name="Denning D.W."/>
        </authorList>
    </citation>
    <scope>NUCLEOTIDE SEQUENCE [LARGE SCALE GENOMIC DNA]</scope>
    <source>
        <strain>ATCC MYA-4609 / CBS 101355 / FGSC A1100 / Af293</strain>
    </source>
</reference>
<reference key="2">
    <citation type="journal article" date="2012" name="Eukaryot. Cell">
        <title>Dsc orthologs are required for hypoxia adaptation, triazole drug responses, and fungal virulence in Aspergillus fumigatus.</title>
        <authorList>
            <person name="Willger S.D."/>
            <person name="Cornish E.J."/>
            <person name="Chung D."/>
            <person name="Fleming B.A."/>
            <person name="Lehmann M.M."/>
            <person name="Puttikamonkul S."/>
            <person name="Cramer R.A."/>
        </authorList>
    </citation>
    <scope>FUNCTION</scope>
    <scope>DISRUPTION PHENOTYPE</scope>
</reference>
<keyword id="KW-0256">Endoplasmic reticulum</keyword>
<keyword id="KW-0325">Glycoprotein</keyword>
<keyword id="KW-0472">Membrane</keyword>
<keyword id="KW-1185">Reference proteome</keyword>
<keyword id="KW-0812">Transmembrane</keyword>
<keyword id="KW-1133">Transmembrane helix</keyword>
<keyword id="KW-0833">Ubl conjugation pathway</keyword>
<organism>
    <name type="scientific">Aspergillus fumigatus (strain ATCC MYA-4609 / CBS 101355 / FGSC A1100 / Af293)</name>
    <name type="common">Neosartorya fumigata</name>
    <dbReference type="NCBI Taxonomy" id="330879"/>
    <lineage>
        <taxon>Eukaryota</taxon>
        <taxon>Fungi</taxon>
        <taxon>Dikarya</taxon>
        <taxon>Ascomycota</taxon>
        <taxon>Pezizomycotina</taxon>
        <taxon>Eurotiomycetes</taxon>
        <taxon>Eurotiomycetidae</taxon>
        <taxon>Eurotiales</taxon>
        <taxon>Aspergillaceae</taxon>
        <taxon>Aspergillus</taxon>
        <taxon>Aspergillus subgen. Fumigati</taxon>
    </lineage>
</organism>
<sequence length="331" mass="36763">MTTPDAFRDAEYIADVSGISYGNVANLTEQDANVVPRENERMRKLQLAAKVAFIDRLLRDLDILIYCELSALYYMDCSVILFAIRAIVQLIFFTPKAPPFDPTRNQPFIGAIFVSNIFCMIFHNFFTHPEASEATRGYLHGGLLIDFIGQKAPISLFRLFLLDFLVLILDLVMLGLIVERVKTTGQTSTTSTEILRVQDHDSEERGVHRTRPESRSSVVGAELDETDGHITRANAGVGEQAEHTQLLADPSEDGHTPGAKNSHPLDAFSSGEAVIMNLGLFDVIRDQWKYSTTAPPARTSSYIPSDQTAAFLRARFGLQVGPDGRVQRIES</sequence>
<comment type="function">
    <text evidence="4">Component of the DSC E3 ubiquitin ligase complex which is required for the srbA transcriptional activator proteolytic cleavage to release the soluble transcription factor from the membrane in low oxygen or sterol conditions (PubMed:23104569). Required for growth during hypoxia and triazole drug susceptibility, as well as for virulence in a murine model of invasive pulmonary aspergillosis (IPA) (PubMed:23104569).</text>
</comment>
<comment type="pathway">
    <text evidence="6">Protein modification; protein ubiquitination.</text>
</comment>
<comment type="subunit">
    <text evidence="6">Component of the DSC E3 ubiquitin ligase complex composed of dscA, dscB, dscC and dscD.</text>
</comment>
<comment type="subcellular location">
    <subcellularLocation>
        <location evidence="6">Endoplasmic reticulum membrane</location>
        <topology evidence="1">Multi-pass membrane protein</topology>
    </subcellularLocation>
</comment>
<comment type="disruption phenotype">
    <text evidence="4">Impairs growth on solid media under hypoxia and leads to triazole susceptibility (PubMed:23104569). Impairs virulence in a murine model of invasive pulmonary aspergillosis (IPA) (PubMed:23104569).</text>
</comment>
<proteinExistence type="inferred from homology"/>
<name>DSCD_ASPFU</name>
<protein>
    <recommendedName>
        <fullName evidence="5">DSC E3 ubiquitin ligase complex subunit D</fullName>
    </recommendedName>
    <alternativeName>
        <fullName evidence="5">Defective for SREBP cleavage protein D</fullName>
    </alternativeName>
</protein>
<accession>Q4WX61</accession>
<evidence type="ECO:0000255" key="1"/>
<evidence type="ECO:0000255" key="2">
    <source>
        <dbReference type="PROSITE-ProRule" id="PRU00498"/>
    </source>
</evidence>
<evidence type="ECO:0000256" key="3">
    <source>
        <dbReference type="SAM" id="MobiDB-lite"/>
    </source>
</evidence>
<evidence type="ECO:0000269" key="4">
    <source>
    </source>
</evidence>
<evidence type="ECO:0000303" key="5">
    <source>
    </source>
</evidence>
<evidence type="ECO:0000305" key="6">
    <source>
    </source>
</evidence>